<dbReference type="EC" id="4.1.3.40" evidence="1"/>
<dbReference type="EMBL" id="CP000438">
    <property type="protein sequence ID" value="ABJ14740.1"/>
    <property type="molecule type" value="Genomic_DNA"/>
</dbReference>
<dbReference type="RefSeq" id="WP_003096645.1">
    <property type="nucleotide sequence ID" value="NZ_CP034244.1"/>
</dbReference>
<dbReference type="SMR" id="Q02E05"/>
<dbReference type="KEGG" id="pau:PA14_70720"/>
<dbReference type="PseudoCAP" id="PA14_70720"/>
<dbReference type="HOGENOM" id="CLU_096824_3_0_6"/>
<dbReference type="BioCyc" id="PAER208963:G1G74-5951-MONOMER"/>
<dbReference type="UniPathway" id="UPA00232"/>
<dbReference type="Proteomes" id="UP000000653">
    <property type="component" value="Chromosome"/>
</dbReference>
<dbReference type="GO" id="GO:0005829">
    <property type="term" value="C:cytosol"/>
    <property type="evidence" value="ECO:0007669"/>
    <property type="project" value="TreeGrafter"/>
</dbReference>
<dbReference type="GO" id="GO:0008813">
    <property type="term" value="F:chorismate lyase activity"/>
    <property type="evidence" value="ECO:0007669"/>
    <property type="project" value="UniProtKB-UniRule"/>
</dbReference>
<dbReference type="GO" id="GO:0042866">
    <property type="term" value="P:pyruvate biosynthetic process"/>
    <property type="evidence" value="ECO:0007669"/>
    <property type="project" value="UniProtKB-UniRule"/>
</dbReference>
<dbReference type="GO" id="GO:0006744">
    <property type="term" value="P:ubiquinone biosynthetic process"/>
    <property type="evidence" value="ECO:0007669"/>
    <property type="project" value="UniProtKB-UniRule"/>
</dbReference>
<dbReference type="Gene3D" id="3.40.1410.10">
    <property type="entry name" value="Chorismate lyase-like"/>
    <property type="match status" value="1"/>
</dbReference>
<dbReference type="HAMAP" id="MF_01632">
    <property type="entry name" value="UbiC"/>
    <property type="match status" value="1"/>
</dbReference>
<dbReference type="InterPro" id="IPR007440">
    <property type="entry name" value="Chorismate--pyruvate_lyase"/>
</dbReference>
<dbReference type="InterPro" id="IPR028978">
    <property type="entry name" value="Chorismate_lyase_/UTRA_dom_sf"/>
</dbReference>
<dbReference type="PANTHER" id="PTHR38683">
    <property type="entry name" value="CHORISMATE PYRUVATE-LYASE"/>
    <property type="match status" value="1"/>
</dbReference>
<dbReference type="PANTHER" id="PTHR38683:SF1">
    <property type="entry name" value="CHORISMATE PYRUVATE-LYASE"/>
    <property type="match status" value="1"/>
</dbReference>
<dbReference type="Pfam" id="PF04345">
    <property type="entry name" value="Chor_lyase"/>
    <property type="match status" value="1"/>
</dbReference>
<dbReference type="SUPFAM" id="SSF64288">
    <property type="entry name" value="Chorismate lyase-like"/>
    <property type="match status" value="1"/>
</dbReference>
<protein>
    <recommendedName>
        <fullName evidence="1">Probable chorismate pyruvate-lyase</fullName>
        <shortName evidence="1">CL</shortName>
        <shortName evidence="1">CPL</shortName>
        <ecNumber evidence="1">4.1.3.40</ecNumber>
    </recommendedName>
</protein>
<organism>
    <name type="scientific">Pseudomonas aeruginosa (strain UCBPP-PA14)</name>
    <dbReference type="NCBI Taxonomy" id="208963"/>
    <lineage>
        <taxon>Bacteria</taxon>
        <taxon>Pseudomonadati</taxon>
        <taxon>Pseudomonadota</taxon>
        <taxon>Gammaproteobacteria</taxon>
        <taxon>Pseudomonadales</taxon>
        <taxon>Pseudomonadaceae</taxon>
        <taxon>Pseudomonas</taxon>
    </lineage>
</organism>
<proteinExistence type="inferred from homology"/>
<keyword id="KW-0963">Cytoplasm</keyword>
<keyword id="KW-0456">Lyase</keyword>
<keyword id="KW-0670">Pyruvate</keyword>
<keyword id="KW-0831">Ubiquinone biosynthesis</keyword>
<gene>
    <name evidence="1" type="primary">ubiC</name>
    <name type="ordered locus">PA14_70720</name>
</gene>
<accession>Q02E05</accession>
<reference key="1">
    <citation type="journal article" date="2006" name="Genome Biol.">
        <title>Genomic analysis reveals that Pseudomonas aeruginosa virulence is combinatorial.</title>
        <authorList>
            <person name="Lee D.G."/>
            <person name="Urbach J.M."/>
            <person name="Wu G."/>
            <person name="Liberati N.T."/>
            <person name="Feinbaum R.L."/>
            <person name="Miyata S."/>
            <person name="Diggins L.T."/>
            <person name="He J."/>
            <person name="Saucier M."/>
            <person name="Deziel E."/>
            <person name="Friedman L."/>
            <person name="Li L."/>
            <person name="Grills G."/>
            <person name="Montgomery K."/>
            <person name="Kucherlapati R."/>
            <person name="Rahme L.G."/>
            <person name="Ausubel F.M."/>
        </authorList>
    </citation>
    <scope>NUCLEOTIDE SEQUENCE [LARGE SCALE GENOMIC DNA]</scope>
    <source>
        <strain>UCBPP-PA14</strain>
    </source>
</reference>
<name>UBIC_PSEAB</name>
<sequence>MPSNALWLRADQLSSVSPTVLDWLFDEGSLTRRLTALADGAFRVEPLLEGWQTLRDDECQGLDVPPGSSGWVREVYLHGHDRPWVFARSVAARSALEGSGFDLALLGTRSLGELLFSDSAFERGPIEVCRYPAAGLPAEVRAEGLWGRRSRFSRGALGVLVAEVFLPSLWDQAGIADV</sequence>
<comment type="function">
    <text evidence="1">Removes the pyruvyl group from chorismate, with concomitant aromatization of the ring, to provide 4-hydroxybenzoate (4HB) for the ubiquinone pathway.</text>
</comment>
<comment type="catalytic activity">
    <reaction evidence="1">
        <text>chorismate = 4-hydroxybenzoate + pyruvate</text>
        <dbReference type="Rhea" id="RHEA:16505"/>
        <dbReference type="ChEBI" id="CHEBI:15361"/>
        <dbReference type="ChEBI" id="CHEBI:17879"/>
        <dbReference type="ChEBI" id="CHEBI:29748"/>
        <dbReference type="EC" id="4.1.3.40"/>
    </reaction>
</comment>
<comment type="pathway">
    <text evidence="1">Cofactor biosynthesis; ubiquinone biosynthesis.</text>
</comment>
<comment type="subcellular location">
    <subcellularLocation>
        <location evidence="1">Cytoplasm</location>
    </subcellularLocation>
</comment>
<comment type="similarity">
    <text evidence="1">Belongs to the UbiC family.</text>
</comment>
<evidence type="ECO:0000255" key="1">
    <source>
        <dbReference type="HAMAP-Rule" id="MF_01632"/>
    </source>
</evidence>
<feature type="chain" id="PRO_0000292071" description="Probable chorismate pyruvate-lyase">
    <location>
        <begin position="1"/>
        <end position="178"/>
    </location>
</feature>
<feature type="binding site" evidence="1">
    <location>
        <position position="73"/>
    </location>
    <ligand>
        <name>substrate</name>
    </ligand>
</feature>
<feature type="binding site" evidence="1">
    <location>
        <position position="111"/>
    </location>
    <ligand>
        <name>substrate</name>
    </ligand>
</feature>
<feature type="binding site" evidence="1">
    <location>
        <position position="163"/>
    </location>
    <ligand>
        <name>substrate</name>
    </ligand>
</feature>